<keyword id="KW-0032">Aminotransferase</keyword>
<keyword id="KW-0496">Mitochondrion</keyword>
<keyword id="KW-0663">Pyridoxal phosphate</keyword>
<keyword id="KW-1185">Reference proteome</keyword>
<keyword id="KW-0808">Transferase</keyword>
<keyword id="KW-0809">Transit peptide</keyword>
<dbReference type="EC" id="2.6.1.1"/>
<dbReference type="EMBL" id="X68052">
    <property type="protein sequence ID" value="CAA48188.1"/>
    <property type="molecule type" value="Genomic_DNA"/>
</dbReference>
<dbReference type="EMBL" id="X71133">
    <property type="protein sequence ID" value="CAA50451.1"/>
    <property type="molecule type" value="Genomic_DNA"/>
</dbReference>
<dbReference type="EMBL" id="Z28106">
    <property type="protein sequence ID" value="CAA81946.1"/>
    <property type="molecule type" value="Genomic_DNA"/>
</dbReference>
<dbReference type="EMBL" id="BK006944">
    <property type="protein sequence ID" value="DAA09052.1"/>
    <property type="molecule type" value="Genomic_DNA"/>
</dbReference>
<dbReference type="PIR" id="S37933">
    <property type="entry name" value="S37933"/>
</dbReference>
<dbReference type="RefSeq" id="NP_012816.1">
    <property type="nucleotide sequence ID" value="NM_001179672.1"/>
</dbReference>
<dbReference type="SMR" id="Q01802"/>
<dbReference type="BioGRID" id="34028">
    <property type="interactions" value="126"/>
</dbReference>
<dbReference type="DIP" id="DIP-4608N"/>
<dbReference type="FunCoup" id="Q01802">
    <property type="interactions" value="307"/>
</dbReference>
<dbReference type="IntAct" id="Q01802">
    <property type="interactions" value="5"/>
</dbReference>
<dbReference type="STRING" id="4932.YKL106W"/>
<dbReference type="iPTMnet" id="Q01802"/>
<dbReference type="PaxDb" id="4932-YKL106W"/>
<dbReference type="PeptideAtlas" id="Q01802"/>
<dbReference type="EnsemblFungi" id="YKL106W_mRNA">
    <property type="protein sequence ID" value="YKL106W"/>
    <property type="gene ID" value="YKL106W"/>
</dbReference>
<dbReference type="GeneID" id="853755"/>
<dbReference type="KEGG" id="sce:YKL106W"/>
<dbReference type="AGR" id="SGD:S000001589"/>
<dbReference type="SGD" id="S000001589">
    <property type="gene designation" value="AAT1"/>
</dbReference>
<dbReference type="VEuPathDB" id="FungiDB:YKL106W"/>
<dbReference type="eggNOG" id="KOG1411">
    <property type="taxonomic scope" value="Eukaryota"/>
</dbReference>
<dbReference type="GeneTree" id="ENSGT00950000183082"/>
<dbReference type="HOGENOM" id="CLU_032440_0_0_1"/>
<dbReference type="InParanoid" id="Q01802"/>
<dbReference type="OMA" id="VGACTIV"/>
<dbReference type="OrthoDB" id="6752799at2759"/>
<dbReference type="BioCyc" id="YEAST:YKL106W-MONOMER"/>
<dbReference type="Reactome" id="R-SCE-389661">
    <property type="pathway name" value="Glyoxylate metabolism and glycine degradation"/>
</dbReference>
<dbReference type="Reactome" id="R-SCE-8963693">
    <property type="pathway name" value="Aspartate and asparagine metabolism"/>
</dbReference>
<dbReference type="Reactome" id="R-SCE-8964539">
    <property type="pathway name" value="Glutamate and glutamine metabolism"/>
</dbReference>
<dbReference type="Reactome" id="R-SCE-9856872">
    <property type="pathway name" value="Malate-aspartate shuttle"/>
</dbReference>
<dbReference type="BioGRID-ORCS" id="853755">
    <property type="hits" value="1 hit in 10 CRISPR screens"/>
</dbReference>
<dbReference type="PRO" id="PR:Q01802"/>
<dbReference type="Proteomes" id="UP000002311">
    <property type="component" value="Chromosome XI"/>
</dbReference>
<dbReference type="RNAct" id="Q01802">
    <property type="molecule type" value="protein"/>
</dbReference>
<dbReference type="GO" id="GO:0005759">
    <property type="term" value="C:mitochondrial matrix"/>
    <property type="evidence" value="ECO:0007669"/>
    <property type="project" value="UniProtKB-SubCell"/>
</dbReference>
<dbReference type="GO" id="GO:0005739">
    <property type="term" value="C:mitochondrion"/>
    <property type="evidence" value="ECO:0000314"/>
    <property type="project" value="SGD"/>
</dbReference>
<dbReference type="GO" id="GO:0004069">
    <property type="term" value="F:L-aspartate:2-oxoglutarate aminotransferase activity"/>
    <property type="evidence" value="ECO:0000250"/>
    <property type="project" value="UniProtKB"/>
</dbReference>
<dbReference type="GO" id="GO:0030170">
    <property type="term" value="F:pyridoxal phosphate binding"/>
    <property type="evidence" value="ECO:0007669"/>
    <property type="project" value="InterPro"/>
</dbReference>
<dbReference type="GO" id="GO:0006103">
    <property type="term" value="P:2-oxoglutarate metabolic process"/>
    <property type="evidence" value="ECO:0000250"/>
    <property type="project" value="UniProtKB"/>
</dbReference>
<dbReference type="GO" id="GO:1901605">
    <property type="term" value="P:alpha-amino acid metabolic process"/>
    <property type="evidence" value="ECO:0000315"/>
    <property type="project" value="SGD"/>
</dbReference>
<dbReference type="GO" id="GO:0006533">
    <property type="term" value="P:aspartate catabolic process"/>
    <property type="evidence" value="ECO:0000318"/>
    <property type="project" value="GO_Central"/>
</dbReference>
<dbReference type="GO" id="GO:0006531">
    <property type="term" value="P:aspartate metabolic process"/>
    <property type="evidence" value="ECO:0000250"/>
    <property type="project" value="UniProtKB"/>
</dbReference>
<dbReference type="GO" id="GO:0009058">
    <property type="term" value="P:biosynthetic process"/>
    <property type="evidence" value="ECO:0007669"/>
    <property type="project" value="InterPro"/>
</dbReference>
<dbReference type="GO" id="GO:0006536">
    <property type="term" value="P:glutamate metabolic process"/>
    <property type="evidence" value="ECO:0000250"/>
    <property type="project" value="UniProtKB"/>
</dbReference>
<dbReference type="CDD" id="cd00609">
    <property type="entry name" value="AAT_like"/>
    <property type="match status" value="1"/>
</dbReference>
<dbReference type="FunFam" id="3.40.640.10:FF:000066">
    <property type="entry name" value="Aspartate aminotransferase"/>
    <property type="match status" value="1"/>
</dbReference>
<dbReference type="Gene3D" id="3.90.1150.10">
    <property type="entry name" value="Aspartate Aminotransferase, domain 1"/>
    <property type="match status" value="1"/>
</dbReference>
<dbReference type="Gene3D" id="3.40.640.10">
    <property type="entry name" value="Type I PLP-dependent aspartate aminotransferase-like (Major domain)"/>
    <property type="match status" value="1"/>
</dbReference>
<dbReference type="InterPro" id="IPR004839">
    <property type="entry name" value="Aminotransferase_I/II_large"/>
</dbReference>
<dbReference type="InterPro" id="IPR000796">
    <property type="entry name" value="Asp_trans"/>
</dbReference>
<dbReference type="InterPro" id="IPR004838">
    <property type="entry name" value="NHTrfase_class1_PyrdxlP-BS"/>
</dbReference>
<dbReference type="InterPro" id="IPR015424">
    <property type="entry name" value="PyrdxlP-dep_Trfase"/>
</dbReference>
<dbReference type="InterPro" id="IPR015421">
    <property type="entry name" value="PyrdxlP-dep_Trfase_major"/>
</dbReference>
<dbReference type="InterPro" id="IPR015422">
    <property type="entry name" value="PyrdxlP-dep_Trfase_small"/>
</dbReference>
<dbReference type="PANTHER" id="PTHR11879">
    <property type="entry name" value="ASPARTATE AMINOTRANSFERASE"/>
    <property type="match status" value="1"/>
</dbReference>
<dbReference type="PANTHER" id="PTHR11879:SF22">
    <property type="entry name" value="ASPARTATE AMINOTRANSFERASE, MITOCHONDRIAL"/>
    <property type="match status" value="1"/>
</dbReference>
<dbReference type="Pfam" id="PF00155">
    <property type="entry name" value="Aminotran_1_2"/>
    <property type="match status" value="1"/>
</dbReference>
<dbReference type="PRINTS" id="PR00799">
    <property type="entry name" value="TRANSAMINASE"/>
</dbReference>
<dbReference type="SUPFAM" id="SSF53383">
    <property type="entry name" value="PLP-dependent transferases"/>
    <property type="match status" value="1"/>
</dbReference>
<dbReference type="PROSITE" id="PS00105">
    <property type="entry name" value="AA_TRANSFER_CLASS_1"/>
    <property type="match status" value="1"/>
</dbReference>
<evidence type="ECO:0000250" key="1"/>
<evidence type="ECO:0000255" key="2"/>
<evidence type="ECO:0000269" key="3">
    <source>
    </source>
</evidence>
<evidence type="ECO:0000269" key="4">
    <source>
    </source>
</evidence>
<evidence type="ECO:0000269" key="5">
    <source>
    </source>
</evidence>
<evidence type="ECO:0000269" key="6">
    <source>
    </source>
</evidence>
<evidence type="ECO:0000305" key="7"/>
<accession>Q01802</accession>
<accession>D6VXI2</accession>
<organism>
    <name type="scientific">Saccharomyces cerevisiae (strain ATCC 204508 / S288c)</name>
    <name type="common">Baker's yeast</name>
    <dbReference type="NCBI Taxonomy" id="559292"/>
    <lineage>
        <taxon>Eukaryota</taxon>
        <taxon>Fungi</taxon>
        <taxon>Dikarya</taxon>
        <taxon>Ascomycota</taxon>
        <taxon>Saccharomycotina</taxon>
        <taxon>Saccharomycetes</taxon>
        <taxon>Saccharomycetales</taxon>
        <taxon>Saccharomycetaceae</taxon>
        <taxon>Saccharomyces</taxon>
    </lineage>
</organism>
<feature type="transit peptide" description="Mitochondrion" evidence="2">
    <location>
        <begin position="1"/>
        <end status="unknown"/>
    </location>
</feature>
<feature type="chain" id="PRO_0000001213" description="Aspartate aminotransferase, mitochondrial">
    <location>
        <begin status="unknown"/>
        <end position="451"/>
    </location>
</feature>
<feature type="binding site" evidence="1">
    <location>
        <position position="52"/>
    </location>
    <ligand>
        <name>L-aspartate</name>
        <dbReference type="ChEBI" id="CHEBI:29991"/>
    </ligand>
</feature>
<feature type="binding site" evidence="1">
    <location>
        <position position="155"/>
    </location>
    <ligand>
        <name>L-aspartate</name>
        <dbReference type="ChEBI" id="CHEBI:29991"/>
    </ligand>
</feature>
<feature type="binding site" evidence="1">
    <location>
        <position position="216"/>
    </location>
    <ligand>
        <name>L-aspartate</name>
        <dbReference type="ChEBI" id="CHEBI:29991"/>
    </ligand>
</feature>
<feature type="binding site" evidence="1">
    <location>
        <position position="423"/>
    </location>
    <ligand>
        <name>L-aspartate</name>
        <dbReference type="ChEBI" id="CHEBI:29991"/>
    </ligand>
</feature>
<feature type="modified residue" description="N6-(pyridoxal phosphate)lysine" evidence="1">
    <location>
        <position position="286"/>
    </location>
</feature>
<feature type="sequence conflict" description="In Ref. 1; CAA48188." evidence="7" ref="1">
    <original>V</original>
    <variation>A</variation>
    <location>
        <position position="41"/>
    </location>
</feature>
<feature type="sequence conflict" description="In Ref. 1; CAA48188." evidence="7" ref="1">
    <original>Y</original>
    <variation>S</variation>
    <location>
        <position position="414"/>
    </location>
</feature>
<gene>
    <name type="primary">AAT1</name>
    <name type="ordered locus">YKL106W</name>
    <name type="ORF">YKL461</name>
</gene>
<proteinExistence type="evidence at protein level"/>
<name>AATM_YEAST</name>
<reference key="1">
    <citation type="journal article" date="1992" name="Biochim. Biophys. Acta">
        <title>AAT1, a gene encoding a mitochondrial aspartate aminotransferase in Saccharomyces cerevisiae.</title>
        <authorList>
            <person name="Morin P.J."/>
            <person name="Subramanian G.S."/>
            <person name="Gilmore T.D."/>
        </authorList>
    </citation>
    <scope>NUCLEOTIDE SEQUENCE [GENOMIC DNA]</scope>
    <scope>ENZYME ACTIVITY</scope>
</reference>
<reference key="2">
    <citation type="journal article" date="1993" name="Yeast">
        <title>The DNA sequence analysis of the HAP4-LAP4 region on chromosome XI of Saccharomyces cerevisiae suggests the presence of a second aspartate aminotransferase gene in yeast.</title>
        <authorList>
            <person name="Cheret G."/>
            <person name="Pallier C."/>
            <person name="Valens M."/>
            <person name="Daignan-Fornier B."/>
            <person name="Fukuhara H."/>
            <person name="Bolotin-Fukuhara M."/>
            <person name="Sor F."/>
        </authorList>
    </citation>
    <scope>NUCLEOTIDE SEQUENCE [GENOMIC DNA]</scope>
    <source>
        <strain>ATCC 204508 / S288c</strain>
    </source>
</reference>
<reference key="3">
    <citation type="journal article" date="1994" name="Nature">
        <title>Complete DNA sequence of yeast chromosome XI.</title>
        <authorList>
            <person name="Dujon B."/>
            <person name="Alexandraki D."/>
            <person name="Andre B."/>
            <person name="Ansorge W."/>
            <person name="Baladron V."/>
            <person name="Ballesta J.P.G."/>
            <person name="Banrevi A."/>
            <person name="Bolle P.-A."/>
            <person name="Bolotin-Fukuhara M."/>
            <person name="Bossier P."/>
            <person name="Bou G."/>
            <person name="Boyer J."/>
            <person name="Buitrago M.J."/>
            <person name="Cheret G."/>
            <person name="Colleaux L."/>
            <person name="Daignan-Fornier B."/>
            <person name="del Rey F."/>
            <person name="Dion C."/>
            <person name="Domdey H."/>
            <person name="Duesterhoeft A."/>
            <person name="Duesterhus S."/>
            <person name="Entian K.-D."/>
            <person name="Erfle H."/>
            <person name="Esteban P.F."/>
            <person name="Feldmann H."/>
            <person name="Fernandes L."/>
            <person name="Fobo G.M."/>
            <person name="Fritz C."/>
            <person name="Fukuhara H."/>
            <person name="Gabel C."/>
            <person name="Gaillon L."/>
            <person name="Garcia-Cantalejo J.M."/>
            <person name="Garcia-Ramirez J.J."/>
            <person name="Gent M.E."/>
            <person name="Ghazvini M."/>
            <person name="Goffeau A."/>
            <person name="Gonzalez A."/>
            <person name="Grothues D."/>
            <person name="Guerreiro P."/>
            <person name="Hegemann J.H."/>
            <person name="Hewitt N."/>
            <person name="Hilger F."/>
            <person name="Hollenberg C.P."/>
            <person name="Horaitis O."/>
            <person name="Indge K.J."/>
            <person name="Jacquier A."/>
            <person name="James C.M."/>
            <person name="Jauniaux J.-C."/>
            <person name="Jimenez A."/>
            <person name="Keuchel H."/>
            <person name="Kirchrath L."/>
            <person name="Kleine K."/>
            <person name="Koetter P."/>
            <person name="Legrain P."/>
            <person name="Liebl S."/>
            <person name="Louis E.J."/>
            <person name="Maia e Silva A."/>
            <person name="Marck C."/>
            <person name="Monnier A.-L."/>
            <person name="Moestl D."/>
            <person name="Mueller S."/>
            <person name="Obermaier B."/>
            <person name="Oliver S.G."/>
            <person name="Pallier C."/>
            <person name="Pascolo S."/>
            <person name="Pfeiffer F."/>
            <person name="Philippsen P."/>
            <person name="Planta R.J."/>
            <person name="Pohl F.M."/>
            <person name="Pohl T.M."/>
            <person name="Poehlmann R."/>
            <person name="Portetelle D."/>
            <person name="Purnelle B."/>
            <person name="Puzos V."/>
            <person name="Ramezani Rad M."/>
            <person name="Rasmussen S.W."/>
            <person name="Remacha M.A."/>
            <person name="Revuelta J.L."/>
            <person name="Richard G.-F."/>
            <person name="Rieger M."/>
            <person name="Rodrigues-Pousada C."/>
            <person name="Rose M."/>
            <person name="Rupp T."/>
            <person name="Santos M.A."/>
            <person name="Schwager C."/>
            <person name="Sensen C."/>
            <person name="Skala J."/>
            <person name="Soares H."/>
            <person name="Sor F."/>
            <person name="Stegemann J."/>
            <person name="Tettelin H."/>
            <person name="Thierry A."/>
            <person name="Tzermia M."/>
            <person name="Urrestarazu L.A."/>
            <person name="van Dyck L."/>
            <person name="van Vliet-Reedijk J.C."/>
            <person name="Valens M."/>
            <person name="Vandenbol M."/>
            <person name="Vilela C."/>
            <person name="Vissers S."/>
            <person name="von Wettstein D."/>
            <person name="Voss H."/>
            <person name="Wiemann S."/>
            <person name="Xu G."/>
            <person name="Zimmermann J."/>
            <person name="Haasemann M."/>
            <person name="Becker I."/>
            <person name="Mewes H.-W."/>
        </authorList>
    </citation>
    <scope>NUCLEOTIDE SEQUENCE [LARGE SCALE GENOMIC DNA]</scope>
    <source>
        <strain>ATCC 204508 / S288c</strain>
    </source>
</reference>
<reference key="4">
    <citation type="journal article" date="2014" name="G3 (Bethesda)">
        <title>The reference genome sequence of Saccharomyces cerevisiae: Then and now.</title>
        <authorList>
            <person name="Engel S.R."/>
            <person name="Dietrich F.S."/>
            <person name="Fisk D.G."/>
            <person name="Binkley G."/>
            <person name="Balakrishnan R."/>
            <person name="Costanzo M.C."/>
            <person name="Dwight S.S."/>
            <person name="Hitz B.C."/>
            <person name="Karra K."/>
            <person name="Nash R.S."/>
            <person name="Weng S."/>
            <person name="Wong E.D."/>
            <person name="Lloyd P."/>
            <person name="Skrzypek M.S."/>
            <person name="Miyasato S.R."/>
            <person name="Simison M."/>
            <person name="Cherry J.M."/>
        </authorList>
    </citation>
    <scope>GENOME REANNOTATION</scope>
    <source>
        <strain>ATCC 204508 / S288c</strain>
    </source>
</reference>
<reference key="5">
    <citation type="journal article" date="2003" name="Nature">
        <title>Global analysis of protein localization in budding yeast.</title>
        <authorList>
            <person name="Huh W.-K."/>
            <person name="Falvo J.V."/>
            <person name="Gerke L.C."/>
            <person name="Carroll A.S."/>
            <person name="Howson R.W."/>
            <person name="Weissman J.S."/>
            <person name="O'Shea E.K."/>
        </authorList>
    </citation>
    <scope>SUBCELLULAR LOCATION [LARGE SCALE ANALYSIS]</scope>
</reference>
<reference key="6">
    <citation type="journal article" date="2003" name="Nature">
        <title>Global analysis of protein expression in yeast.</title>
        <authorList>
            <person name="Ghaemmaghami S."/>
            <person name="Huh W.-K."/>
            <person name="Bower K."/>
            <person name="Howson R.W."/>
            <person name="Belle A."/>
            <person name="Dephoure N."/>
            <person name="O'Shea E.K."/>
            <person name="Weissman J.S."/>
        </authorList>
    </citation>
    <scope>LEVEL OF PROTEIN EXPRESSION [LARGE SCALE ANALYSIS]</scope>
</reference>
<reference key="7">
    <citation type="journal article" date="2003" name="Proc. Natl. Acad. Sci. U.S.A.">
        <title>The proteome of Saccharomyces cerevisiae mitochondria.</title>
        <authorList>
            <person name="Sickmann A."/>
            <person name="Reinders J."/>
            <person name="Wagner Y."/>
            <person name="Joppich C."/>
            <person name="Zahedi R.P."/>
            <person name="Meyer H.E."/>
            <person name="Schoenfisch B."/>
            <person name="Perschil I."/>
            <person name="Chacinska A."/>
            <person name="Guiard B."/>
            <person name="Rehling P."/>
            <person name="Pfanner N."/>
            <person name="Meisinger C."/>
        </authorList>
    </citation>
    <scope>SUBCELLULAR LOCATION [LARGE SCALE ANALYSIS]</scope>
    <source>
        <strain>ATCC 76625 / YPH499</strain>
    </source>
</reference>
<comment type="function">
    <text evidence="1">Plays a key role in amino acid metabolism. Important for metabolite exchange between mitochondria and cytosol (By similarity).</text>
</comment>
<comment type="catalytic activity">
    <reaction evidence="6">
        <text>L-aspartate + 2-oxoglutarate = oxaloacetate + L-glutamate</text>
        <dbReference type="Rhea" id="RHEA:21824"/>
        <dbReference type="ChEBI" id="CHEBI:16452"/>
        <dbReference type="ChEBI" id="CHEBI:16810"/>
        <dbReference type="ChEBI" id="CHEBI:29985"/>
        <dbReference type="ChEBI" id="CHEBI:29991"/>
        <dbReference type="EC" id="2.6.1.1"/>
    </reaction>
</comment>
<comment type="cofactor">
    <cofactor>
        <name>pyridoxal 5'-phosphate</name>
        <dbReference type="ChEBI" id="CHEBI:597326"/>
    </cofactor>
</comment>
<comment type="subunit">
    <text>Homodimer.</text>
</comment>
<comment type="subcellular location">
    <subcellularLocation>
        <location evidence="3 5">Mitochondrion matrix</location>
    </subcellularLocation>
</comment>
<comment type="miscellaneous">
    <text>In eukaryotes there are cytoplasmic, mitochondrial and chloroplastic isozymes.</text>
</comment>
<comment type="miscellaneous">
    <text evidence="4">Present with 2910 molecules/cell in log phase SD medium.</text>
</comment>
<comment type="similarity">
    <text evidence="7">Belongs to the class-I pyridoxal-phosphate-dependent aminotransferase family.</text>
</comment>
<sequence>MLRTRLTNCSLWRPYYTSSLSRVPRAPPDKVLGLSEHFKKVKNVNKIDLTVGIYKDGWGKVTTFPSVAKAQKLIESHLELNKNLSYLPITGSKEFQENVMKFLFKESCPQFGPFYLAHDRISFVQTLSGTGALAVAAKFLALFISRDIWIPDPSWANHKNIFQNNGFENIYRYSYYKDGQIDIDGWIEQLKTFAYNNQQENNKNPPCIILHACCHNPTGLDPTKEQWEKIIDTIYELKMVPIVDMAYQGLESGNLLKDAYLLRLCLNVNKYPNWSNGIFLCQSFAKNMGLYGERVGSLSVITPATANNGKFNPLQQKNSLQQNIDSQLKKIVRGMYSSPPGYGSRVVNVVLSDFKLKQQWFKDVDFMVQRLHHVRQEMFDRLGWPDLVNFAQQHGMFYYTRFSPKQVEILRNNYFVYLTGDGRLSLSGVNDSNVDYLCESLEAVSKMDKLA</sequence>
<protein>
    <recommendedName>
        <fullName>Aspartate aminotransferase, mitochondrial</fullName>
        <ecNumber>2.6.1.1</ecNumber>
    </recommendedName>
    <alternativeName>
        <fullName>Transaminase A</fullName>
    </alternativeName>
</protein>